<sequence length="368" mass="38940">MTVKLTIDCMGGDHGPSVTVPAAVKFVRSHPDAHLMLVGIESAIRAQLKKCKALGEPALSVVPATEVVAMDDPVEVALRKKKDSSMRVALNHVKEGAAQACISAGNTGALMAVSRYVLKTLPGIERPAIAFALPNPTGYTMMLDLGANVDCEPQHLLQFAEMGHALVAALEGKERPTIGLLNIGEEVIKGNETIKRAGELLRASTLNFRGNVEGNDIYKGTVDVIVCDGFVGNVALKTSEGLAQMLADIIKEEFSRSLLSKLMAILALPVLLRFKKRVDHRQYNGAALLGLRSLVIKSHGSADAYAFEWAIKRGYDAVKNGVLERLSRAMAENAAPLGESGRDANGAGQASPSAGQPAEPSAALSSKT</sequence>
<keyword id="KW-0963">Cytoplasm</keyword>
<keyword id="KW-0444">Lipid biosynthesis</keyword>
<keyword id="KW-0443">Lipid metabolism</keyword>
<keyword id="KW-0594">Phospholipid biosynthesis</keyword>
<keyword id="KW-1208">Phospholipid metabolism</keyword>
<keyword id="KW-0808">Transferase</keyword>
<dbReference type="EC" id="2.3.1.274" evidence="1"/>
<dbReference type="EMBL" id="CP000526">
    <property type="protein sequence ID" value="ABM52915.1"/>
    <property type="molecule type" value="Genomic_DNA"/>
</dbReference>
<dbReference type="RefSeq" id="WP_004192749.1">
    <property type="nucleotide sequence ID" value="NC_008785.1"/>
</dbReference>
<dbReference type="SMR" id="A1V6D1"/>
<dbReference type="GeneID" id="93061023"/>
<dbReference type="KEGG" id="bmv:BMASAVP1_A2480"/>
<dbReference type="HOGENOM" id="CLU_039379_1_0_4"/>
<dbReference type="UniPathway" id="UPA00085"/>
<dbReference type="GO" id="GO:0005737">
    <property type="term" value="C:cytoplasm"/>
    <property type="evidence" value="ECO:0007669"/>
    <property type="project" value="UniProtKB-SubCell"/>
</dbReference>
<dbReference type="GO" id="GO:0043811">
    <property type="term" value="F:phosphate:acyl-[acyl carrier protein] acyltransferase activity"/>
    <property type="evidence" value="ECO:0007669"/>
    <property type="project" value="UniProtKB-UniRule"/>
</dbReference>
<dbReference type="GO" id="GO:0006633">
    <property type="term" value="P:fatty acid biosynthetic process"/>
    <property type="evidence" value="ECO:0007669"/>
    <property type="project" value="UniProtKB-UniRule"/>
</dbReference>
<dbReference type="GO" id="GO:0008654">
    <property type="term" value="P:phospholipid biosynthetic process"/>
    <property type="evidence" value="ECO:0007669"/>
    <property type="project" value="UniProtKB-KW"/>
</dbReference>
<dbReference type="Gene3D" id="3.40.718.10">
    <property type="entry name" value="Isopropylmalate Dehydrogenase"/>
    <property type="match status" value="1"/>
</dbReference>
<dbReference type="HAMAP" id="MF_00019">
    <property type="entry name" value="PlsX"/>
    <property type="match status" value="1"/>
</dbReference>
<dbReference type="InterPro" id="IPR003664">
    <property type="entry name" value="FA_synthesis"/>
</dbReference>
<dbReference type="InterPro" id="IPR012281">
    <property type="entry name" value="Phospholipid_synth_PlsX-like"/>
</dbReference>
<dbReference type="NCBIfam" id="TIGR00182">
    <property type="entry name" value="plsX"/>
    <property type="match status" value="1"/>
</dbReference>
<dbReference type="PANTHER" id="PTHR30100">
    <property type="entry name" value="FATTY ACID/PHOSPHOLIPID SYNTHESIS PROTEIN PLSX"/>
    <property type="match status" value="1"/>
</dbReference>
<dbReference type="PANTHER" id="PTHR30100:SF1">
    <property type="entry name" value="PHOSPHATE ACYLTRANSFERASE"/>
    <property type="match status" value="1"/>
</dbReference>
<dbReference type="Pfam" id="PF02504">
    <property type="entry name" value="FA_synthesis"/>
    <property type="match status" value="1"/>
</dbReference>
<dbReference type="PIRSF" id="PIRSF002465">
    <property type="entry name" value="Phsphlp_syn_PlsX"/>
    <property type="match status" value="1"/>
</dbReference>
<dbReference type="SUPFAM" id="SSF53659">
    <property type="entry name" value="Isocitrate/Isopropylmalate dehydrogenase-like"/>
    <property type="match status" value="1"/>
</dbReference>
<gene>
    <name evidence="1" type="primary">plsX</name>
    <name type="ordered locus">BMASAVP1_A2480</name>
</gene>
<feature type="chain" id="PRO_1000001731" description="Phosphate acyltransferase">
    <location>
        <begin position="1"/>
        <end position="368"/>
    </location>
</feature>
<feature type="region of interest" description="Disordered" evidence="2">
    <location>
        <begin position="334"/>
        <end position="368"/>
    </location>
</feature>
<comment type="function">
    <text evidence="1">Catalyzes the reversible formation of acyl-phosphate (acyl-PO(4)) from acyl-[acyl-carrier-protein] (acyl-ACP). This enzyme utilizes acyl-ACP as fatty acyl donor, but not acyl-CoA.</text>
</comment>
<comment type="catalytic activity">
    <reaction evidence="1">
        <text>a fatty acyl-[ACP] + phosphate = an acyl phosphate + holo-[ACP]</text>
        <dbReference type="Rhea" id="RHEA:42292"/>
        <dbReference type="Rhea" id="RHEA-COMP:9685"/>
        <dbReference type="Rhea" id="RHEA-COMP:14125"/>
        <dbReference type="ChEBI" id="CHEBI:43474"/>
        <dbReference type="ChEBI" id="CHEBI:59918"/>
        <dbReference type="ChEBI" id="CHEBI:64479"/>
        <dbReference type="ChEBI" id="CHEBI:138651"/>
        <dbReference type="EC" id="2.3.1.274"/>
    </reaction>
</comment>
<comment type="pathway">
    <text evidence="1">Lipid metabolism; phospholipid metabolism.</text>
</comment>
<comment type="subunit">
    <text evidence="1">Homodimer. Probably interacts with PlsY.</text>
</comment>
<comment type="subcellular location">
    <subcellularLocation>
        <location evidence="1">Cytoplasm</location>
    </subcellularLocation>
    <text evidence="1">Associated with the membrane possibly through PlsY.</text>
</comment>
<comment type="similarity">
    <text evidence="1">Belongs to the PlsX family.</text>
</comment>
<accession>A1V6D1</accession>
<organism>
    <name type="scientific">Burkholderia mallei (strain SAVP1)</name>
    <dbReference type="NCBI Taxonomy" id="320388"/>
    <lineage>
        <taxon>Bacteria</taxon>
        <taxon>Pseudomonadati</taxon>
        <taxon>Pseudomonadota</taxon>
        <taxon>Betaproteobacteria</taxon>
        <taxon>Burkholderiales</taxon>
        <taxon>Burkholderiaceae</taxon>
        <taxon>Burkholderia</taxon>
        <taxon>pseudomallei group</taxon>
    </lineage>
</organism>
<name>PLSX_BURMS</name>
<evidence type="ECO:0000255" key="1">
    <source>
        <dbReference type="HAMAP-Rule" id="MF_00019"/>
    </source>
</evidence>
<evidence type="ECO:0000256" key="2">
    <source>
        <dbReference type="SAM" id="MobiDB-lite"/>
    </source>
</evidence>
<reference key="1">
    <citation type="journal article" date="2010" name="Genome Biol. Evol.">
        <title>Continuing evolution of Burkholderia mallei through genome reduction and large-scale rearrangements.</title>
        <authorList>
            <person name="Losada L."/>
            <person name="Ronning C.M."/>
            <person name="DeShazer D."/>
            <person name="Woods D."/>
            <person name="Fedorova N."/>
            <person name="Kim H.S."/>
            <person name="Shabalina S.A."/>
            <person name="Pearson T.R."/>
            <person name="Brinkac L."/>
            <person name="Tan P."/>
            <person name="Nandi T."/>
            <person name="Crabtree J."/>
            <person name="Badger J."/>
            <person name="Beckstrom-Sternberg S."/>
            <person name="Saqib M."/>
            <person name="Schutzer S.E."/>
            <person name="Keim P."/>
            <person name="Nierman W.C."/>
        </authorList>
    </citation>
    <scope>NUCLEOTIDE SEQUENCE [LARGE SCALE GENOMIC DNA]</scope>
    <source>
        <strain>SAVP1</strain>
    </source>
</reference>
<proteinExistence type="inferred from homology"/>
<protein>
    <recommendedName>
        <fullName evidence="1">Phosphate acyltransferase</fullName>
        <ecNumber evidence="1">2.3.1.274</ecNumber>
    </recommendedName>
    <alternativeName>
        <fullName evidence="1">Acyl-ACP phosphotransacylase</fullName>
    </alternativeName>
    <alternativeName>
        <fullName evidence="1">Acyl-[acyl-carrier-protein]--phosphate acyltransferase</fullName>
    </alternativeName>
    <alternativeName>
        <fullName evidence="1">Phosphate-acyl-ACP acyltransferase</fullName>
    </alternativeName>
</protein>